<proteinExistence type="inferred from homology"/>
<evidence type="ECO:0000255" key="1">
    <source>
        <dbReference type="HAMAP-Rule" id="MF_00054"/>
    </source>
</evidence>
<reference key="1">
    <citation type="journal article" date="2005" name="Genome Res.">
        <title>The Chlamydophila abortus genome sequence reveals an array of variable proteins that contribute to interspecies variation.</title>
        <authorList>
            <person name="Thomson N.R."/>
            <person name="Yeats C."/>
            <person name="Bell K."/>
            <person name="Holden M.T.G."/>
            <person name="Bentley S.D."/>
            <person name="Livingstone M."/>
            <person name="Cerdeno-Tarraga A.-M."/>
            <person name="Harris B."/>
            <person name="Doggett J."/>
            <person name="Ormond D."/>
            <person name="Mungall K."/>
            <person name="Clarke K."/>
            <person name="Feltwell T."/>
            <person name="Hance Z."/>
            <person name="Sanders M."/>
            <person name="Quail M.A."/>
            <person name="Price C."/>
            <person name="Barrell B.G."/>
            <person name="Parkhill J."/>
            <person name="Longbottom D."/>
        </authorList>
    </citation>
    <scope>NUCLEOTIDE SEQUENCE [LARGE SCALE GENOMIC DNA]</scope>
    <source>
        <strain>DSM 27085 / S26/3</strain>
    </source>
</reference>
<organism>
    <name type="scientific">Chlamydia abortus (strain DSM 27085 / S26/3)</name>
    <name type="common">Chlamydophila abortus</name>
    <dbReference type="NCBI Taxonomy" id="218497"/>
    <lineage>
        <taxon>Bacteria</taxon>
        <taxon>Pseudomonadati</taxon>
        <taxon>Chlamydiota</taxon>
        <taxon>Chlamydiia</taxon>
        <taxon>Chlamydiales</taxon>
        <taxon>Chlamydiaceae</taxon>
        <taxon>Chlamydia/Chlamydophila group</taxon>
        <taxon>Chlamydia</taxon>
    </lineage>
</organism>
<keyword id="KW-0963">Cytoplasm</keyword>
<keyword id="KW-0251">Elongation factor</keyword>
<keyword id="KW-0342">GTP-binding</keyword>
<keyword id="KW-0547">Nucleotide-binding</keyword>
<keyword id="KW-0648">Protein biosynthesis</keyword>
<protein>
    <recommendedName>
        <fullName evidence="1">Elongation factor G</fullName>
        <shortName evidence="1">EF-G</shortName>
    </recommendedName>
</protein>
<comment type="function">
    <text evidence="1">Catalyzes the GTP-dependent ribosomal translocation step during translation elongation. During this step, the ribosome changes from the pre-translocational (PRE) to the post-translocational (POST) state as the newly formed A-site-bound peptidyl-tRNA and P-site-bound deacylated tRNA move to the P and E sites, respectively. Catalyzes the coordinated movement of the two tRNA molecules, the mRNA and conformational changes in the ribosome.</text>
</comment>
<comment type="subcellular location">
    <subcellularLocation>
        <location evidence="1">Cytoplasm</location>
    </subcellularLocation>
</comment>
<comment type="similarity">
    <text evidence="1">Belongs to the TRAFAC class translation factor GTPase superfamily. Classic translation factor GTPase family. EF-G/EF-2 subfamily.</text>
</comment>
<accession>Q5L6S5</accession>
<gene>
    <name evidence="1" type="primary">fusA</name>
    <name type="ordered locus">CAB188</name>
</gene>
<sequence length="694" mass="76891">MSDQEFDLSKIRNIGIMAHIDAGKTTTTERILYYAGRTHKIGEVHEGGATMDWMEQEQERGITITSAATTVFWLDCKINIIDTPGHVDFTIEVERSLRVLDGAVAVFDAVSGVEPQSETVWRQANKYGVPRIAFVNKMDRMGADYFAAVESMKEKLGANAVAVHCPIGSESQFVGMVDLISQKALYFLDETLGAKWEEREIPEELKEKCAELRYALLEELATVDESNEAFMMKVLEDPDAITEEEIHSVMRKGVIENKINPVLCGTAFKNKGVQQLLNVIVKWLPSPKDRGTIHGINLKNNEEVYLEPRRDGPLAALAFKIMTDPYVGRITFIRIYSGTLKKGSAILNSTKDKKERISRLLEMHANERTDRDEFTVGDIGACVGLKYSVTGDTLCEENQEIVLERIEIPEPVIDMAIEPKSKGDREKLAQALSALSEEDPTFRVTSNEEIGQTIISGMGELHLDILRDRMIREFKVEANVGKPQVSYKETITTSSNSETKYVKQSGGRGQYAHVCLEIEPNEPGKGNEIVSKIVGGVIPKEYIPAVMKGVEEGLNTGVLAGYGLVDVKVNIVFGSYHEVDSSEMAFKICGSMAVKEACRKAAPVILEPIMKIAVITPEDHLGDVIGDLNRRRGKILGQESSRGMAQVNAEVPLSEMFGYTTSLRSLTSGRATSTMEPAFFAKVPQKIQEEIVKK</sequence>
<dbReference type="EMBL" id="CR848038">
    <property type="protein sequence ID" value="CAH63646.1"/>
    <property type="molecule type" value="Genomic_DNA"/>
</dbReference>
<dbReference type="RefSeq" id="WP_011096888.1">
    <property type="nucleotide sequence ID" value="NC_004552.2"/>
</dbReference>
<dbReference type="SMR" id="Q5L6S5"/>
<dbReference type="KEGG" id="cab:CAB188"/>
<dbReference type="eggNOG" id="COG0480">
    <property type="taxonomic scope" value="Bacteria"/>
</dbReference>
<dbReference type="HOGENOM" id="CLU_002794_4_1_0"/>
<dbReference type="OrthoDB" id="9801591at2"/>
<dbReference type="Proteomes" id="UP000001012">
    <property type="component" value="Chromosome"/>
</dbReference>
<dbReference type="GO" id="GO:0005737">
    <property type="term" value="C:cytoplasm"/>
    <property type="evidence" value="ECO:0007669"/>
    <property type="project" value="UniProtKB-SubCell"/>
</dbReference>
<dbReference type="GO" id="GO:0005525">
    <property type="term" value="F:GTP binding"/>
    <property type="evidence" value="ECO:0007669"/>
    <property type="project" value="UniProtKB-UniRule"/>
</dbReference>
<dbReference type="GO" id="GO:0003924">
    <property type="term" value="F:GTPase activity"/>
    <property type="evidence" value="ECO:0007669"/>
    <property type="project" value="InterPro"/>
</dbReference>
<dbReference type="GO" id="GO:0003746">
    <property type="term" value="F:translation elongation factor activity"/>
    <property type="evidence" value="ECO:0007669"/>
    <property type="project" value="UniProtKB-UniRule"/>
</dbReference>
<dbReference type="GO" id="GO:0032790">
    <property type="term" value="P:ribosome disassembly"/>
    <property type="evidence" value="ECO:0007669"/>
    <property type="project" value="TreeGrafter"/>
</dbReference>
<dbReference type="CDD" id="cd01886">
    <property type="entry name" value="EF-G"/>
    <property type="match status" value="1"/>
</dbReference>
<dbReference type="CDD" id="cd16262">
    <property type="entry name" value="EFG_III"/>
    <property type="match status" value="1"/>
</dbReference>
<dbReference type="CDD" id="cd01434">
    <property type="entry name" value="EFG_mtEFG1_IV"/>
    <property type="match status" value="1"/>
</dbReference>
<dbReference type="CDD" id="cd03713">
    <property type="entry name" value="EFG_mtEFG_C"/>
    <property type="match status" value="1"/>
</dbReference>
<dbReference type="CDD" id="cd04088">
    <property type="entry name" value="EFG_mtEFG_II"/>
    <property type="match status" value="1"/>
</dbReference>
<dbReference type="FunFam" id="2.40.30.10:FF:000006">
    <property type="entry name" value="Elongation factor G"/>
    <property type="match status" value="1"/>
</dbReference>
<dbReference type="FunFam" id="3.30.230.10:FF:000003">
    <property type="entry name" value="Elongation factor G"/>
    <property type="match status" value="1"/>
</dbReference>
<dbReference type="FunFam" id="3.30.70.240:FF:000001">
    <property type="entry name" value="Elongation factor G"/>
    <property type="match status" value="1"/>
</dbReference>
<dbReference type="FunFam" id="3.30.70.870:FF:000001">
    <property type="entry name" value="Elongation factor G"/>
    <property type="match status" value="1"/>
</dbReference>
<dbReference type="FunFam" id="3.40.50.300:FF:000029">
    <property type="entry name" value="Elongation factor G"/>
    <property type="match status" value="1"/>
</dbReference>
<dbReference type="Gene3D" id="3.30.230.10">
    <property type="match status" value="1"/>
</dbReference>
<dbReference type="Gene3D" id="3.30.70.240">
    <property type="match status" value="1"/>
</dbReference>
<dbReference type="Gene3D" id="3.30.70.870">
    <property type="entry name" value="Elongation Factor G (Translational Gtpase), domain 3"/>
    <property type="match status" value="1"/>
</dbReference>
<dbReference type="Gene3D" id="3.40.50.300">
    <property type="entry name" value="P-loop containing nucleotide triphosphate hydrolases"/>
    <property type="match status" value="1"/>
</dbReference>
<dbReference type="Gene3D" id="2.40.30.10">
    <property type="entry name" value="Translation factors"/>
    <property type="match status" value="1"/>
</dbReference>
<dbReference type="HAMAP" id="MF_00054_B">
    <property type="entry name" value="EF_G_EF_2_B"/>
    <property type="match status" value="1"/>
</dbReference>
<dbReference type="InterPro" id="IPR041095">
    <property type="entry name" value="EFG_II"/>
</dbReference>
<dbReference type="InterPro" id="IPR009022">
    <property type="entry name" value="EFG_III"/>
</dbReference>
<dbReference type="InterPro" id="IPR035647">
    <property type="entry name" value="EFG_III/V"/>
</dbReference>
<dbReference type="InterPro" id="IPR047872">
    <property type="entry name" value="EFG_IV"/>
</dbReference>
<dbReference type="InterPro" id="IPR035649">
    <property type="entry name" value="EFG_V"/>
</dbReference>
<dbReference type="InterPro" id="IPR000640">
    <property type="entry name" value="EFG_V-like"/>
</dbReference>
<dbReference type="InterPro" id="IPR004161">
    <property type="entry name" value="EFTu-like_2"/>
</dbReference>
<dbReference type="InterPro" id="IPR031157">
    <property type="entry name" value="G_TR_CS"/>
</dbReference>
<dbReference type="InterPro" id="IPR027417">
    <property type="entry name" value="P-loop_NTPase"/>
</dbReference>
<dbReference type="InterPro" id="IPR020568">
    <property type="entry name" value="Ribosomal_Su5_D2-typ_SF"/>
</dbReference>
<dbReference type="InterPro" id="IPR014721">
    <property type="entry name" value="Ribsml_uS5_D2-typ_fold_subgr"/>
</dbReference>
<dbReference type="InterPro" id="IPR005225">
    <property type="entry name" value="Small_GTP-bd"/>
</dbReference>
<dbReference type="InterPro" id="IPR000795">
    <property type="entry name" value="T_Tr_GTP-bd_dom"/>
</dbReference>
<dbReference type="InterPro" id="IPR009000">
    <property type="entry name" value="Transl_B-barrel_sf"/>
</dbReference>
<dbReference type="InterPro" id="IPR004540">
    <property type="entry name" value="Transl_elong_EFG/EF2"/>
</dbReference>
<dbReference type="InterPro" id="IPR005517">
    <property type="entry name" value="Transl_elong_EFG/EF2_IV"/>
</dbReference>
<dbReference type="NCBIfam" id="TIGR00484">
    <property type="entry name" value="EF-G"/>
    <property type="match status" value="1"/>
</dbReference>
<dbReference type="NCBIfam" id="NF009381">
    <property type="entry name" value="PRK12740.1-5"/>
    <property type="match status" value="1"/>
</dbReference>
<dbReference type="NCBIfam" id="TIGR00231">
    <property type="entry name" value="small_GTP"/>
    <property type="match status" value="1"/>
</dbReference>
<dbReference type="PANTHER" id="PTHR43261:SF1">
    <property type="entry name" value="RIBOSOME-RELEASING FACTOR 2, MITOCHONDRIAL"/>
    <property type="match status" value="1"/>
</dbReference>
<dbReference type="PANTHER" id="PTHR43261">
    <property type="entry name" value="TRANSLATION ELONGATION FACTOR G-RELATED"/>
    <property type="match status" value="1"/>
</dbReference>
<dbReference type="Pfam" id="PF00679">
    <property type="entry name" value="EFG_C"/>
    <property type="match status" value="1"/>
</dbReference>
<dbReference type="Pfam" id="PF14492">
    <property type="entry name" value="EFG_III"/>
    <property type="match status" value="1"/>
</dbReference>
<dbReference type="Pfam" id="PF03764">
    <property type="entry name" value="EFG_IV"/>
    <property type="match status" value="1"/>
</dbReference>
<dbReference type="Pfam" id="PF00009">
    <property type="entry name" value="GTP_EFTU"/>
    <property type="match status" value="1"/>
</dbReference>
<dbReference type="Pfam" id="PF03144">
    <property type="entry name" value="GTP_EFTU_D2"/>
    <property type="match status" value="1"/>
</dbReference>
<dbReference type="PRINTS" id="PR00315">
    <property type="entry name" value="ELONGATNFCT"/>
</dbReference>
<dbReference type="SMART" id="SM00838">
    <property type="entry name" value="EFG_C"/>
    <property type="match status" value="1"/>
</dbReference>
<dbReference type="SMART" id="SM00889">
    <property type="entry name" value="EFG_IV"/>
    <property type="match status" value="1"/>
</dbReference>
<dbReference type="SUPFAM" id="SSF54980">
    <property type="entry name" value="EF-G C-terminal domain-like"/>
    <property type="match status" value="2"/>
</dbReference>
<dbReference type="SUPFAM" id="SSF52540">
    <property type="entry name" value="P-loop containing nucleoside triphosphate hydrolases"/>
    <property type="match status" value="1"/>
</dbReference>
<dbReference type="SUPFAM" id="SSF54211">
    <property type="entry name" value="Ribosomal protein S5 domain 2-like"/>
    <property type="match status" value="1"/>
</dbReference>
<dbReference type="SUPFAM" id="SSF50447">
    <property type="entry name" value="Translation proteins"/>
    <property type="match status" value="1"/>
</dbReference>
<dbReference type="PROSITE" id="PS00301">
    <property type="entry name" value="G_TR_1"/>
    <property type="match status" value="1"/>
</dbReference>
<dbReference type="PROSITE" id="PS51722">
    <property type="entry name" value="G_TR_2"/>
    <property type="match status" value="1"/>
</dbReference>
<name>EFG_CHLAB</name>
<feature type="chain" id="PRO_0000225202" description="Elongation factor G">
    <location>
        <begin position="1"/>
        <end position="694"/>
    </location>
</feature>
<feature type="domain" description="tr-type G">
    <location>
        <begin position="9"/>
        <end position="288"/>
    </location>
</feature>
<feature type="binding site" evidence="1">
    <location>
        <begin position="18"/>
        <end position="25"/>
    </location>
    <ligand>
        <name>GTP</name>
        <dbReference type="ChEBI" id="CHEBI:37565"/>
    </ligand>
</feature>
<feature type="binding site" evidence="1">
    <location>
        <begin position="82"/>
        <end position="86"/>
    </location>
    <ligand>
        <name>GTP</name>
        <dbReference type="ChEBI" id="CHEBI:37565"/>
    </ligand>
</feature>
<feature type="binding site" evidence="1">
    <location>
        <begin position="136"/>
        <end position="139"/>
    </location>
    <ligand>
        <name>GTP</name>
        <dbReference type="ChEBI" id="CHEBI:37565"/>
    </ligand>
</feature>